<feature type="signal peptide" evidence="2">
    <location>
        <begin position="1"/>
        <end position="24"/>
    </location>
</feature>
<feature type="propeptide" id="PRO_0000328805" evidence="2">
    <location>
        <begin position="25"/>
        <end position="320"/>
    </location>
</feature>
<feature type="chain" id="PRO_0000328806" description="Growth/differentiation factor 9">
    <location>
        <begin position="321"/>
        <end position="455"/>
    </location>
</feature>
<feature type="region of interest" description="Disordered" evidence="3">
    <location>
        <begin position="305"/>
        <end position="328"/>
    </location>
</feature>
<feature type="glycosylation site" description="N-linked (GlcNAc...) asparagine" evidence="2">
    <location>
        <position position="106"/>
    </location>
</feature>
<feature type="glycosylation site" description="N-linked (GlcNAc...) asparagine" evidence="2">
    <location>
        <position position="163"/>
    </location>
</feature>
<feature type="glycosylation site" description="N-linked (GlcNAc...) asparagine" evidence="2">
    <location>
        <position position="236"/>
    </location>
</feature>
<feature type="glycosylation site" description="N-linked (GlcNAc...) asparagine" evidence="2">
    <location>
        <position position="255"/>
    </location>
</feature>
<feature type="glycosylation site" description="N-linked (GlcNAc...) asparagine" evidence="2">
    <location>
        <position position="269"/>
    </location>
</feature>
<feature type="glycosylation site" description="N-linked (GlcNAc...) asparagine" evidence="2">
    <location>
        <position position="339"/>
    </location>
</feature>
<feature type="disulfide bond" evidence="1">
    <location>
        <begin position="354"/>
        <end position="420"/>
    </location>
</feature>
<feature type="disulfide bond" evidence="1">
    <location>
        <begin position="383"/>
        <end position="452"/>
    </location>
</feature>
<feature type="disulfide bond" evidence="1">
    <location>
        <begin position="387"/>
        <end position="454"/>
    </location>
</feature>
<proteinExistence type="inferred from homology"/>
<organism>
    <name type="scientific">Papio anubis</name>
    <name type="common">Olive baboon</name>
    <dbReference type="NCBI Taxonomy" id="9555"/>
    <lineage>
        <taxon>Eukaryota</taxon>
        <taxon>Metazoa</taxon>
        <taxon>Chordata</taxon>
        <taxon>Craniata</taxon>
        <taxon>Vertebrata</taxon>
        <taxon>Euteleostomi</taxon>
        <taxon>Mammalia</taxon>
        <taxon>Eutheria</taxon>
        <taxon>Euarchontoglires</taxon>
        <taxon>Primates</taxon>
        <taxon>Haplorrhini</taxon>
        <taxon>Catarrhini</taxon>
        <taxon>Cercopithecidae</taxon>
        <taxon>Cercopithecinae</taxon>
        <taxon>Papio</taxon>
    </lineage>
</organism>
<comment type="function">
    <text evidence="1">Required for ovarian folliculogenesis.</text>
</comment>
<comment type="subunit">
    <text evidence="1 4">Homodimer or heterodimer (Potential). But, in contrast to other members of this family, cannot be disulfide-linked (By similarity).</text>
</comment>
<comment type="subcellular location">
    <subcellularLocation>
        <location evidence="1">Secreted</location>
    </subcellularLocation>
</comment>
<comment type="PTM">
    <text evidence="1">Phosphorylated; phosphorylation is critical for GDF9 function.</text>
</comment>
<comment type="miscellaneous">
    <text>Ovarian physiology and fertility are controlled by endocrine and paracrine signals. These act in a species-dependent manner and determine the ovulation quota in different mammalian species. While humans, and mammals such as the cow or red deer, normally ovulate only one egg per cycle, other mammals such as mouse and pig can ovulate in excess of ten per cycle. The mechanisms that regulate the species-specific differences in the number of follicles that go onto ovulate during each reproductive cycle are poorly understood. According to PubMed:21970812, mRNA expression levels of GDF9 and BMP15 are tightly coregulated within each species and influence species-specific ovulation-rates.</text>
</comment>
<comment type="similarity">
    <text evidence="4">Belongs to the TGF-beta family.</text>
</comment>
<sequence>MALPNKFLLWFYCFAWLCFPVSLGSQASGGDAQIAASAELESGATPWSLLQPIDERDRAGLLPPLFKVLSVGRGGAPRLQPDSRALHYMKNLYKTYATKEGIPKSNRSHLYNTVRLFTPCTQHKQVPGDQVTGILPSVDLLFNLDRITTVEHLLKSVLLYTINNSVSFSSAVKCVCNLMIKEPKFSSKTLHRALYSFTFNSQFEFGKKHKWIEIDVTSLLQPLVASNKRSIHMSINFTCMKDQLEHPSAQNGLFNMTLLVPPSLILYLNDTSAQAYHRWYSLYYKRRPSQGPDQERSLSAYPVGEDAAEDGRSSHHRHRRGQETVSSELKKPLVPASFNLSEYFKQFLFPQNECELHDFRLSFSQLKWDNWIVAPHRYNPRYCKGDCPRAVGHRYGSPVHTMVQNIIYEKLDSSVPRPSCVPAKYSPLSVLTIEPDGSIAYKEYEDMIATKCTCR</sequence>
<evidence type="ECO:0000250" key="1"/>
<evidence type="ECO:0000255" key="2"/>
<evidence type="ECO:0000256" key="3">
    <source>
        <dbReference type="SAM" id="MobiDB-lite"/>
    </source>
</evidence>
<evidence type="ECO:0000305" key="4"/>
<dbReference type="EMBL" id="DP000485">
    <property type="protein sequence ID" value="ABW96807.1"/>
    <property type="molecule type" value="Genomic_DNA"/>
</dbReference>
<dbReference type="RefSeq" id="NP_001162234.1">
    <property type="nucleotide sequence ID" value="NM_001168763.1"/>
</dbReference>
<dbReference type="RefSeq" id="XP_031521898.1">
    <property type="nucleotide sequence ID" value="XM_031666038.1"/>
</dbReference>
<dbReference type="RefSeq" id="XP_031521899.1">
    <property type="nucleotide sequence ID" value="XM_031666039.1"/>
</dbReference>
<dbReference type="RefSeq" id="XP_031521900.1">
    <property type="nucleotide sequence ID" value="XM_031666040.1"/>
</dbReference>
<dbReference type="RefSeq" id="XP_031521901.1">
    <property type="nucleotide sequence ID" value="XM_031666041.1"/>
</dbReference>
<dbReference type="RefSeq" id="XP_031521902.1">
    <property type="nucleotide sequence ID" value="XM_031666042.1"/>
</dbReference>
<dbReference type="STRING" id="9555.ENSPANP00000010764"/>
<dbReference type="GlyCosmos" id="A9CB18">
    <property type="glycosylation" value="6 sites, No reported glycans"/>
</dbReference>
<dbReference type="GeneID" id="100137225"/>
<dbReference type="KEGG" id="panu:100137225"/>
<dbReference type="CTD" id="2661"/>
<dbReference type="eggNOG" id="KOG3900">
    <property type="taxonomic scope" value="Eukaryota"/>
</dbReference>
<dbReference type="Proteomes" id="UP000028761">
    <property type="component" value="Unplaced"/>
</dbReference>
<dbReference type="GO" id="GO:0005615">
    <property type="term" value="C:extracellular space"/>
    <property type="evidence" value="ECO:0007669"/>
    <property type="project" value="UniProtKB-KW"/>
</dbReference>
<dbReference type="GO" id="GO:0005125">
    <property type="term" value="F:cytokine activity"/>
    <property type="evidence" value="ECO:0007669"/>
    <property type="project" value="UniProtKB-KW"/>
</dbReference>
<dbReference type="GO" id="GO:0008083">
    <property type="term" value="F:growth factor activity"/>
    <property type="evidence" value="ECO:0007669"/>
    <property type="project" value="UniProtKB-KW"/>
</dbReference>
<dbReference type="CDD" id="cd19403">
    <property type="entry name" value="TGF_beta_GDF9"/>
    <property type="match status" value="1"/>
</dbReference>
<dbReference type="FunFam" id="2.10.90.10:FF:000012">
    <property type="entry name" value="Growth/differentiation factor 9 (Predicted)"/>
    <property type="match status" value="1"/>
</dbReference>
<dbReference type="Gene3D" id="2.10.90.10">
    <property type="entry name" value="Cystine-knot cytokines"/>
    <property type="match status" value="1"/>
</dbReference>
<dbReference type="InterPro" id="IPR029034">
    <property type="entry name" value="Cystine-knot_cytokine"/>
</dbReference>
<dbReference type="InterPro" id="IPR015617">
    <property type="entry name" value="Growth_differentiation_fac-9_C"/>
</dbReference>
<dbReference type="InterPro" id="IPR001839">
    <property type="entry name" value="TGF-b_C"/>
</dbReference>
<dbReference type="InterPro" id="IPR015615">
    <property type="entry name" value="TGF-beta-rel"/>
</dbReference>
<dbReference type="InterPro" id="IPR017948">
    <property type="entry name" value="TGFb_CS"/>
</dbReference>
<dbReference type="PANTHER" id="PTHR11848:SF19">
    <property type="entry name" value="GROWTH_DIFFERENTIATION FACTOR 9"/>
    <property type="match status" value="1"/>
</dbReference>
<dbReference type="PANTHER" id="PTHR11848">
    <property type="entry name" value="TGF-BETA FAMILY"/>
    <property type="match status" value="1"/>
</dbReference>
<dbReference type="Pfam" id="PF00019">
    <property type="entry name" value="TGF_beta"/>
    <property type="match status" value="1"/>
</dbReference>
<dbReference type="SMART" id="SM00204">
    <property type="entry name" value="TGFB"/>
    <property type="match status" value="1"/>
</dbReference>
<dbReference type="SUPFAM" id="SSF57501">
    <property type="entry name" value="Cystine-knot cytokines"/>
    <property type="match status" value="1"/>
</dbReference>
<dbReference type="PROSITE" id="PS00250">
    <property type="entry name" value="TGF_BETA_1"/>
    <property type="match status" value="1"/>
</dbReference>
<dbReference type="PROSITE" id="PS51362">
    <property type="entry name" value="TGF_BETA_2"/>
    <property type="match status" value="1"/>
</dbReference>
<accession>A9CB18</accession>
<keyword id="KW-0165">Cleavage on pair of basic residues</keyword>
<keyword id="KW-0202">Cytokine</keyword>
<keyword id="KW-1015">Disulfide bond</keyword>
<keyword id="KW-0325">Glycoprotein</keyword>
<keyword id="KW-0339">Growth factor</keyword>
<keyword id="KW-0597">Phosphoprotein</keyword>
<keyword id="KW-1185">Reference proteome</keyword>
<keyword id="KW-0964">Secreted</keyword>
<keyword id="KW-0732">Signal</keyword>
<name>GDF9_PAPAN</name>
<gene>
    <name type="primary">GDF9</name>
</gene>
<reference key="1">
    <citation type="submission" date="2007-11" db="EMBL/GenBank/DDBJ databases">
        <title>NISC comparative sequencing initiative.</title>
        <authorList>
            <person name="Antonellis A."/>
            <person name="Benjamin B."/>
            <person name="Blakesley R.W."/>
            <person name="Bouffard G.G."/>
            <person name="Brinkley C."/>
            <person name="Brooks S."/>
            <person name="Chu G."/>
            <person name="Chub I."/>
            <person name="Coleman H."/>
            <person name="Fuksenko T."/>
            <person name="Gestole M."/>
            <person name="Gregory M."/>
            <person name="Guan X."/>
            <person name="Gupta J."/>
            <person name="Gurson N."/>
            <person name="Han E."/>
            <person name="Han J."/>
            <person name="Hansen N."/>
            <person name="Hargrove A."/>
            <person name="Hines-Harris K."/>
            <person name="Ho S.-L."/>
            <person name="Hu P."/>
            <person name="Hunter G."/>
            <person name="Hurle B."/>
            <person name="Idol J.R."/>
            <person name="Johnson T."/>
            <person name="Knight E."/>
            <person name="Kwong P."/>
            <person name="Lee-Lin S.-Q."/>
            <person name="Legaspi R."/>
            <person name="Madden M."/>
            <person name="Maduro Q.L."/>
            <person name="Maduro V.B."/>
            <person name="Margulies E.H."/>
            <person name="Masiello C."/>
            <person name="Maskeri B."/>
            <person name="McDowell J."/>
            <person name="Merkulov G."/>
            <person name="Montemayor C."/>
            <person name="Mullikin J.C."/>
            <person name="Park M."/>
            <person name="Prasad A."/>
            <person name="Ramsahoye C."/>
            <person name="Reddix-Dugue N."/>
            <person name="Riebow N."/>
            <person name="Schandler K."/>
            <person name="Schueler M.G."/>
            <person name="Sison C."/>
            <person name="Smith L."/>
            <person name="Stantripop S."/>
            <person name="Thomas J.W."/>
            <person name="Thomas P.J."/>
            <person name="Tsipouri V."/>
            <person name="Young A."/>
            <person name="Green E.D."/>
        </authorList>
    </citation>
    <scope>NUCLEOTIDE SEQUENCE [LARGE SCALE GENOMIC DNA]</scope>
</reference>
<reference key="2">
    <citation type="journal article" date="2012" name="Mol. Cell. Endocrinol.">
        <title>The ratio of growth differentiation factor 9: bone morphogenetic protein 15 mRNA expression is tightly co-regulated and differs between species over a wide range of ovulation rates.</title>
        <authorList>
            <person name="Crawford J.L."/>
            <person name="McNatty K.P."/>
        </authorList>
    </citation>
    <scope>SPECIES-SPECIFIC OVULATION RATE DETERMINATION</scope>
</reference>
<protein>
    <recommendedName>
        <fullName>Growth/differentiation factor 9</fullName>
        <shortName>GDF-9</shortName>
    </recommendedName>
</protein>